<organism>
    <name type="scientific">Homo sapiens</name>
    <name type="common">Human</name>
    <dbReference type="NCBI Taxonomy" id="9606"/>
    <lineage>
        <taxon>Eukaryota</taxon>
        <taxon>Metazoa</taxon>
        <taxon>Chordata</taxon>
        <taxon>Craniata</taxon>
        <taxon>Vertebrata</taxon>
        <taxon>Euteleostomi</taxon>
        <taxon>Mammalia</taxon>
        <taxon>Eutheria</taxon>
        <taxon>Euarchontoglires</taxon>
        <taxon>Primates</taxon>
        <taxon>Haplorrhini</taxon>
        <taxon>Catarrhini</taxon>
        <taxon>Hominidae</taxon>
        <taxon>Homo</taxon>
    </lineage>
</organism>
<name>ZN362_HUMAN</name>
<accession>Q5T0B9</accession>
<accession>Q8WYU4</accession>
<feature type="chain" id="PRO_0000300812" description="Zinc finger protein 362">
    <location>
        <begin position="1"/>
        <end position="420"/>
    </location>
</feature>
<feature type="zinc finger region" description="C2H2-type 1" evidence="1">
    <location>
        <begin position="227"/>
        <end position="249"/>
    </location>
</feature>
<feature type="zinc finger region" description="C2H2-type 2" evidence="1">
    <location>
        <begin position="255"/>
        <end position="277"/>
    </location>
</feature>
<feature type="zinc finger region" description="C2H2-type 3" evidence="1">
    <location>
        <begin position="283"/>
        <end position="305"/>
    </location>
</feature>
<feature type="zinc finger region" description="C2H2-type 4" evidence="1">
    <location>
        <begin position="311"/>
        <end position="335"/>
    </location>
</feature>
<feature type="zinc finger region" description="C2H2-type 5" evidence="1">
    <location>
        <begin position="341"/>
        <end position="363"/>
    </location>
</feature>
<feature type="zinc finger region" description="C2H2-type 6" evidence="1">
    <location>
        <begin position="371"/>
        <end position="393"/>
    </location>
</feature>
<feature type="region of interest" description="Disordered" evidence="2">
    <location>
        <begin position="1"/>
        <end position="28"/>
    </location>
</feature>
<feature type="region of interest" description="Disordered" evidence="2">
    <location>
        <begin position="54"/>
        <end position="80"/>
    </location>
</feature>
<feature type="region of interest" description="Disordered" evidence="2">
    <location>
        <begin position="115"/>
        <end position="155"/>
    </location>
</feature>
<feature type="region of interest" description="Disordered" evidence="2">
    <location>
        <begin position="178"/>
        <end position="202"/>
    </location>
</feature>
<feature type="compositionally biased region" description="Low complexity" evidence="2">
    <location>
        <begin position="121"/>
        <end position="154"/>
    </location>
</feature>
<feature type="modified residue" description="Phosphothreonine" evidence="4">
    <location>
        <position position="162"/>
    </location>
</feature>
<feature type="modified residue" description="Phosphoserine" evidence="4">
    <location>
        <position position="404"/>
    </location>
</feature>
<feature type="cross-link" description="Glycyl lysine isopeptide (Lys-Gly) (interchain with G-Cter in SUMO2)" evidence="5 6 7">
    <location>
        <position position="198"/>
    </location>
</feature>
<feature type="sequence conflict" description="In Ref. 1; AAL55863." evidence="3" ref="1">
    <original>R</original>
    <variation>L</variation>
    <location>
        <position position="194"/>
    </location>
</feature>
<proteinExistence type="evidence at protein level"/>
<keyword id="KW-0238">DNA-binding</keyword>
<keyword id="KW-1017">Isopeptide bond</keyword>
<keyword id="KW-0479">Metal-binding</keyword>
<keyword id="KW-0539">Nucleus</keyword>
<keyword id="KW-0597">Phosphoprotein</keyword>
<keyword id="KW-1267">Proteomics identification</keyword>
<keyword id="KW-1185">Reference proteome</keyword>
<keyword id="KW-0677">Repeat</keyword>
<keyword id="KW-0804">Transcription</keyword>
<keyword id="KW-0805">Transcription regulation</keyword>
<keyword id="KW-0832">Ubl conjugation</keyword>
<keyword id="KW-0862">Zinc</keyword>
<keyword id="KW-0863">Zinc-finger</keyword>
<dbReference type="EMBL" id="AF318356">
    <property type="protein sequence ID" value="AAL55863.1"/>
    <property type="molecule type" value="mRNA"/>
</dbReference>
<dbReference type="EMBL" id="AL513327">
    <property type="status" value="NOT_ANNOTATED_CDS"/>
    <property type="molecule type" value="Genomic_DNA"/>
</dbReference>
<dbReference type="EMBL" id="CH471059">
    <property type="protein sequence ID" value="EAX07464.1"/>
    <property type="molecule type" value="Genomic_DNA"/>
</dbReference>
<dbReference type="EMBL" id="BC104779">
    <property type="protein sequence ID" value="AAI04780.1"/>
    <property type="molecule type" value="mRNA"/>
</dbReference>
<dbReference type="EMBL" id="BC112113">
    <property type="protein sequence ID" value="AAI12114.1"/>
    <property type="molecule type" value="mRNA"/>
</dbReference>
<dbReference type="CCDS" id="CCDS377.1"/>
<dbReference type="RefSeq" id="NP_001357141.1">
    <property type="nucleotide sequence ID" value="NM_001370212.1"/>
</dbReference>
<dbReference type="RefSeq" id="NP_689706.2">
    <property type="nucleotide sequence ID" value="NM_152493.2"/>
</dbReference>
<dbReference type="RefSeq" id="XP_016855904.1">
    <property type="nucleotide sequence ID" value="XM_017000415.1"/>
</dbReference>
<dbReference type="RefSeq" id="XP_047303065.1">
    <property type="nucleotide sequence ID" value="XM_047447109.1"/>
</dbReference>
<dbReference type="RefSeq" id="XP_054190607.1">
    <property type="nucleotide sequence ID" value="XM_054334632.1"/>
</dbReference>
<dbReference type="SMR" id="Q5T0B9"/>
<dbReference type="BioGRID" id="127190">
    <property type="interactions" value="42"/>
</dbReference>
<dbReference type="FunCoup" id="Q5T0B9">
    <property type="interactions" value="1107"/>
</dbReference>
<dbReference type="IntAct" id="Q5T0B9">
    <property type="interactions" value="8"/>
</dbReference>
<dbReference type="MINT" id="Q5T0B9"/>
<dbReference type="STRING" id="9606.ENSP00000446335"/>
<dbReference type="GlyCosmos" id="Q5T0B9">
    <property type="glycosylation" value="3 sites, 1 glycan"/>
</dbReference>
<dbReference type="GlyGen" id="Q5T0B9">
    <property type="glycosylation" value="11 sites, 1 O-linked glycan (10 sites)"/>
</dbReference>
<dbReference type="iPTMnet" id="Q5T0B9"/>
<dbReference type="PhosphoSitePlus" id="Q5T0B9"/>
<dbReference type="BioMuta" id="ZNF362"/>
<dbReference type="DMDM" id="74756199"/>
<dbReference type="jPOST" id="Q5T0B9"/>
<dbReference type="MassIVE" id="Q5T0B9"/>
<dbReference type="PaxDb" id="9606-ENSP00000446335"/>
<dbReference type="PeptideAtlas" id="Q5T0B9"/>
<dbReference type="ProteomicsDB" id="64148"/>
<dbReference type="Pumba" id="Q5T0B9"/>
<dbReference type="Antibodypedia" id="57865">
    <property type="antibodies" value="27 antibodies from 9 providers"/>
</dbReference>
<dbReference type="DNASU" id="149076"/>
<dbReference type="Ensembl" id="ENST00000373428.5">
    <property type="protein sequence ID" value="ENSP00000362527.5"/>
    <property type="gene ID" value="ENSG00000160094.15"/>
</dbReference>
<dbReference type="Ensembl" id="ENST00000539719.6">
    <property type="protein sequence ID" value="ENSP00000446335.1"/>
    <property type="gene ID" value="ENSG00000160094.15"/>
</dbReference>
<dbReference type="GeneID" id="149076"/>
<dbReference type="KEGG" id="hsa:149076"/>
<dbReference type="MANE-Select" id="ENST00000539719.6">
    <property type="protein sequence ID" value="ENSP00000446335.1"/>
    <property type="RefSeq nucleotide sequence ID" value="NM_152493.3"/>
    <property type="RefSeq protein sequence ID" value="NP_689706.2"/>
</dbReference>
<dbReference type="UCSC" id="uc001bxc.1">
    <property type="organism name" value="human"/>
</dbReference>
<dbReference type="AGR" id="HGNC:18079"/>
<dbReference type="CTD" id="149076"/>
<dbReference type="DisGeNET" id="149076"/>
<dbReference type="GeneCards" id="ZNF362"/>
<dbReference type="HGNC" id="HGNC:18079">
    <property type="gene designation" value="ZNF362"/>
</dbReference>
<dbReference type="HPA" id="ENSG00000160094">
    <property type="expression patterns" value="Low tissue specificity"/>
</dbReference>
<dbReference type="neXtProt" id="NX_Q5T0B9"/>
<dbReference type="OpenTargets" id="ENSG00000160094"/>
<dbReference type="PharmGKB" id="PA38290"/>
<dbReference type="VEuPathDB" id="HostDB:ENSG00000160094"/>
<dbReference type="eggNOG" id="KOG1721">
    <property type="taxonomic scope" value="Eukaryota"/>
</dbReference>
<dbReference type="GeneTree" id="ENSGT00940000156275"/>
<dbReference type="HOGENOM" id="CLU_028030_1_0_1"/>
<dbReference type="InParanoid" id="Q5T0B9"/>
<dbReference type="OMA" id="CWMAEPR"/>
<dbReference type="OrthoDB" id="5305647at2759"/>
<dbReference type="PAN-GO" id="Q5T0B9">
    <property type="GO annotations" value="3 GO annotations based on evolutionary models"/>
</dbReference>
<dbReference type="PhylomeDB" id="Q5T0B9"/>
<dbReference type="TreeFam" id="TF331662"/>
<dbReference type="PathwayCommons" id="Q5T0B9"/>
<dbReference type="SignaLink" id="Q5T0B9"/>
<dbReference type="BioGRID-ORCS" id="149076">
    <property type="hits" value="10 hits in 1172 CRISPR screens"/>
</dbReference>
<dbReference type="ChiTaRS" id="ZNF362">
    <property type="organism name" value="human"/>
</dbReference>
<dbReference type="GenomeRNAi" id="149076"/>
<dbReference type="Pharos" id="Q5T0B9">
    <property type="development level" value="Tdark"/>
</dbReference>
<dbReference type="PRO" id="PR:Q5T0B9"/>
<dbReference type="Proteomes" id="UP000005640">
    <property type="component" value="Chromosome 1"/>
</dbReference>
<dbReference type="RNAct" id="Q5T0B9">
    <property type="molecule type" value="protein"/>
</dbReference>
<dbReference type="Bgee" id="ENSG00000160094">
    <property type="expression patterns" value="Expressed in parotid gland and 183 other cell types or tissues"/>
</dbReference>
<dbReference type="ExpressionAtlas" id="Q5T0B9">
    <property type="expression patterns" value="baseline and differential"/>
</dbReference>
<dbReference type="GO" id="GO:0005634">
    <property type="term" value="C:nucleus"/>
    <property type="evidence" value="ECO:0007669"/>
    <property type="project" value="UniProtKB-SubCell"/>
</dbReference>
<dbReference type="GO" id="GO:0003700">
    <property type="term" value="F:DNA-binding transcription factor activity"/>
    <property type="evidence" value="ECO:0000318"/>
    <property type="project" value="GO_Central"/>
</dbReference>
<dbReference type="GO" id="GO:0000978">
    <property type="term" value="F:RNA polymerase II cis-regulatory region sequence-specific DNA binding"/>
    <property type="evidence" value="ECO:0000318"/>
    <property type="project" value="GO_Central"/>
</dbReference>
<dbReference type="GO" id="GO:0008270">
    <property type="term" value="F:zinc ion binding"/>
    <property type="evidence" value="ECO:0007669"/>
    <property type="project" value="UniProtKB-KW"/>
</dbReference>
<dbReference type="GO" id="GO:0006357">
    <property type="term" value="P:regulation of transcription by RNA polymerase II"/>
    <property type="evidence" value="ECO:0000318"/>
    <property type="project" value="GO_Central"/>
</dbReference>
<dbReference type="FunFam" id="3.30.160.60:FF:000233">
    <property type="entry name" value="Putative zinc finger protein 362"/>
    <property type="match status" value="1"/>
</dbReference>
<dbReference type="FunFam" id="3.30.160.60:FF:000158">
    <property type="entry name" value="Zinc finger protein 362"/>
    <property type="match status" value="1"/>
</dbReference>
<dbReference type="FunFam" id="3.30.160.60:FF:000377">
    <property type="entry name" value="zinc finger protein 362 isoform X4"/>
    <property type="match status" value="1"/>
</dbReference>
<dbReference type="FunFam" id="3.30.160.60:FF:000216">
    <property type="entry name" value="Zinc finger protein 384 like"/>
    <property type="match status" value="1"/>
</dbReference>
<dbReference type="Gene3D" id="3.30.160.60">
    <property type="entry name" value="Classic Zinc Finger"/>
    <property type="match status" value="5"/>
</dbReference>
<dbReference type="InterPro" id="IPR036236">
    <property type="entry name" value="Znf_C2H2_sf"/>
</dbReference>
<dbReference type="InterPro" id="IPR013087">
    <property type="entry name" value="Znf_C2H2_type"/>
</dbReference>
<dbReference type="PANTHER" id="PTHR14003">
    <property type="entry name" value="TRANSCRIPTIONAL REPRESSOR PROTEIN YY"/>
    <property type="match status" value="1"/>
</dbReference>
<dbReference type="PANTHER" id="PTHR14003:SF19">
    <property type="entry name" value="YY2 TRANSCRIPTION FACTOR"/>
    <property type="match status" value="1"/>
</dbReference>
<dbReference type="Pfam" id="PF00096">
    <property type="entry name" value="zf-C2H2"/>
    <property type="match status" value="6"/>
</dbReference>
<dbReference type="SMART" id="SM00355">
    <property type="entry name" value="ZnF_C2H2"/>
    <property type="match status" value="6"/>
</dbReference>
<dbReference type="SUPFAM" id="SSF57667">
    <property type="entry name" value="beta-beta-alpha zinc fingers"/>
    <property type="match status" value="3"/>
</dbReference>
<dbReference type="PROSITE" id="PS00028">
    <property type="entry name" value="ZINC_FINGER_C2H2_1"/>
    <property type="match status" value="6"/>
</dbReference>
<dbReference type="PROSITE" id="PS50157">
    <property type="entry name" value="ZINC_FINGER_C2H2_2"/>
    <property type="match status" value="6"/>
</dbReference>
<evidence type="ECO:0000255" key="1">
    <source>
        <dbReference type="PROSITE-ProRule" id="PRU00042"/>
    </source>
</evidence>
<evidence type="ECO:0000256" key="2">
    <source>
        <dbReference type="SAM" id="MobiDB-lite"/>
    </source>
</evidence>
<evidence type="ECO:0000305" key="3"/>
<evidence type="ECO:0007744" key="4">
    <source>
    </source>
</evidence>
<evidence type="ECO:0007744" key="5">
    <source>
    </source>
</evidence>
<evidence type="ECO:0007744" key="6">
    <source>
    </source>
</evidence>
<evidence type="ECO:0007744" key="7">
    <source>
    </source>
</evidence>
<sequence length="420" mass="45814">MSRSSPSGKGHSRMAEPRFNNPYFWPPPPTMPSQLDNLVLINKIKEQLMAEKIRPPHLPPTSASSQQPLLVPPAPAESSQAVMSLPKLQQVPGLHPQAVPQPDVALHARPATSTVTGLGLSTRTPSVSTSESSAGAGTGTGTSTPSTPTTTSQSRLIASSPTLISGITSPPLLDSIKTIQGHGLLGPPKSERGRKKIKAENPGGPPVLVVPYPILASGETAKEGKTYRCKVCPLTFFTKSEMQIHSKSHTEAKPHKCPHCSKSFANASYLAQHLRIHLGVKPYHCSYCDKSFRQLSHLQQHTRIHTGDRPYKCPHPGCEKAFTQLSNLQSHQRQHNKDKPYKCPNCYRAYSDSASLQIHLSAHAIKHAKAYCCSMCGRAYTSETYLMKHMSKHTVVEHLVSHHSPQRTESPGIPVRISLI</sequence>
<reference key="1">
    <citation type="journal article" date="2004" name="Proc. Natl. Acad. Sci. U.S.A.">
        <title>Large-scale cDNA transfection screening for genes related to cancer development and progression.</title>
        <authorList>
            <person name="Wan D."/>
            <person name="Gong Y."/>
            <person name="Qin W."/>
            <person name="Zhang P."/>
            <person name="Li J."/>
            <person name="Wei L."/>
            <person name="Zhou X."/>
            <person name="Li H."/>
            <person name="Qiu X."/>
            <person name="Zhong F."/>
            <person name="He L."/>
            <person name="Yu J."/>
            <person name="Yao G."/>
            <person name="Jiang H."/>
            <person name="Qian L."/>
            <person name="Yu Y."/>
            <person name="Shu H."/>
            <person name="Chen X."/>
            <person name="Xu H."/>
            <person name="Guo M."/>
            <person name="Pan Z."/>
            <person name="Chen Y."/>
            <person name="Ge C."/>
            <person name="Yang S."/>
            <person name="Gu J."/>
        </authorList>
    </citation>
    <scope>NUCLEOTIDE SEQUENCE [LARGE SCALE MRNA]</scope>
</reference>
<reference key="2">
    <citation type="journal article" date="2006" name="Nature">
        <title>The DNA sequence and biological annotation of human chromosome 1.</title>
        <authorList>
            <person name="Gregory S.G."/>
            <person name="Barlow K.F."/>
            <person name="McLay K.E."/>
            <person name="Kaul R."/>
            <person name="Swarbreck D."/>
            <person name="Dunham A."/>
            <person name="Scott C.E."/>
            <person name="Howe K.L."/>
            <person name="Woodfine K."/>
            <person name="Spencer C.C.A."/>
            <person name="Jones M.C."/>
            <person name="Gillson C."/>
            <person name="Searle S."/>
            <person name="Zhou Y."/>
            <person name="Kokocinski F."/>
            <person name="McDonald L."/>
            <person name="Evans R."/>
            <person name="Phillips K."/>
            <person name="Atkinson A."/>
            <person name="Cooper R."/>
            <person name="Jones C."/>
            <person name="Hall R.E."/>
            <person name="Andrews T.D."/>
            <person name="Lloyd C."/>
            <person name="Ainscough R."/>
            <person name="Almeida J.P."/>
            <person name="Ambrose K.D."/>
            <person name="Anderson F."/>
            <person name="Andrew R.W."/>
            <person name="Ashwell R.I.S."/>
            <person name="Aubin K."/>
            <person name="Babbage A.K."/>
            <person name="Bagguley C.L."/>
            <person name="Bailey J."/>
            <person name="Beasley H."/>
            <person name="Bethel G."/>
            <person name="Bird C.P."/>
            <person name="Bray-Allen S."/>
            <person name="Brown J.Y."/>
            <person name="Brown A.J."/>
            <person name="Buckley D."/>
            <person name="Burton J."/>
            <person name="Bye J."/>
            <person name="Carder C."/>
            <person name="Chapman J.C."/>
            <person name="Clark S.Y."/>
            <person name="Clarke G."/>
            <person name="Clee C."/>
            <person name="Cobley V."/>
            <person name="Collier R.E."/>
            <person name="Corby N."/>
            <person name="Coville G.J."/>
            <person name="Davies J."/>
            <person name="Deadman R."/>
            <person name="Dunn M."/>
            <person name="Earthrowl M."/>
            <person name="Ellington A.G."/>
            <person name="Errington H."/>
            <person name="Frankish A."/>
            <person name="Frankland J."/>
            <person name="French L."/>
            <person name="Garner P."/>
            <person name="Garnett J."/>
            <person name="Gay L."/>
            <person name="Ghori M.R.J."/>
            <person name="Gibson R."/>
            <person name="Gilby L.M."/>
            <person name="Gillett W."/>
            <person name="Glithero R.J."/>
            <person name="Grafham D.V."/>
            <person name="Griffiths C."/>
            <person name="Griffiths-Jones S."/>
            <person name="Grocock R."/>
            <person name="Hammond S."/>
            <person name="Harrison E.S.I."/>
            <person name="Hart E."/>
            <person name="Haugen E."/>
            <person name="Heath P.D."/>
            <person name="Holmes S."/>
            <person name="Holt K."/>
            <person name="Howden P.J."/>
            <person name="Hunt A.R."/>
            <person name="Hunt S.E."/>
            <person name="Hunter G."/>
            <person name="Isherwood J."/>
            <person name="James R."/>
            <person name="Johnson C."/>
            <person name="Johnson D."/>
            <person name="Joy A."/>
            <person name="Kay M."/>
            <person name="Kershaw J.K."/>
            <person name="Kibukawa M."/>
            <person name="Kimberley A.M."/>
            <person name="King A."/>
            <person name="Knights A.J."/>
            <person name="Lad H."/>
            <person name="Laird G."/>
            <person name="Lawlor S."/>
            <person name="Leongamornlert D.A."/>
            <person name="Lloyd D.M."/>
            <person name="Loveland J."/>
            <person name="Lovell J."/>
            <person name="Lush M.J."/>
            <person name="Lyne R."/>
            <person name="Martin S."/>
            <person name="Mashreghi-Mohammadi M."/>
            <person name="Matthews L."/>
            <person name="Matthews N.S.W."/>
            <person name="McLaren S."/>
            <person name="Milne S."/>
            <person name="Mistry S."/>
            <person name="Moore M.J.F."/>
            <person name="Nickerson T."/>
            <person name="O'Dell C.N."/>
            <person name="Oliver K."/>
            <person name="Palmeiri A."/>
            <person name="Palmer S.A."/>
            <person name="Parker A."/>
            <person name="Patel D."/>
            <person name="Pearce A.V."/>
            <person name="Peck A.I."/>
            <person name="Pelan S."/>
            <person name="Phelps K."/>
            <person name="Phillimore B.J."/>
            <person name="Plumb R."/>
            <person name="Rajan J."/>
            <person name="Raymond C."/>
            <person name="Rouse G."/>
            <person name="Saenphimmachak C."/>
            <person name="Sehra H.K."/>
            <person name="Sheridan E."/>
            <person name="Shownkeen R."/>
            <person name="Sims S."/>
            <person name="Skuce C.D."/>
            <person name="Smith M."/>
            <person name="Steward C."/>
            <person name="Subramanian S."/>
            <person name="Sycamore N."/>
            <person name="Tracey A."/>
            <person name="Tromans A."/>
            <person name="Van Helmond Z."/>
            <person name="Wall M."/>
            <person name="Wallis J.M."/>
            <person name="White S."/>
            <person name="Whitehead S.L."/>
            <person name="Wilkinson J.E."/>
            <person name="Willey D.L."/>
            <person name="Williams H."/>
            <person name="Wilming L."/>
            <person name="Wray P.W."/>
            <person name="Wu Z."/>
            <person name="Coulson A."/>
            <person name="Vaudin M."/>
            <person name="Sulston J.E."/>
            <person name="Durbin R.M."/>
            <person name="Hubbard T."/>
            <person name="Wooster R."/>
            <person name="Dunham I."/>
            <person name="Carter N.P."/>
            <person name="McVean G."/>
            <person name="Ross M.T."/>
            <person name="Harrow J."/>
            <person name="Olson M.V."/>
            <person name="Beck S."/>
            <person name="Rogers J."/>
            <person name="Bentley D.R."/>
        </authorList>
    </citation>
    <scope>NUCLEOTIDE SEQUENCE [LARGE SCALE GENOMIC DNA]</scope>
</reference>
<reference key="3">
    <citation type="submission" date="2005-09" db="EMBL/GenBank/DDBJ databases">
        <authorList>
            <person name="Mural R.J."/>
            <person name="Istrail S."/>
            <person name="Sutton G.G."/>
            <person name="Florea L."/>
            <person name="Halpern A.L."/>
            <person name="Mobarry C.M."/>
            <person name="Lippert R."/>
            <person name="Walenz B."/>
            <person name="Shatkay H."/>
            <person name="Dew I."/>
            <person name="Miller J.R."/>
            <person name="Flanigan M.J."/>
            <person name="Edwards N.J."/>
            <person name="Bolanos R."/>
            <person name="Fasulo D."/>
            <person name="Halldorsson B.V."/>
            <person name="Hannenhalli S."/>
            <person name="Turner R."/>
            <person name="Yooseph S."/>
            <person name="Lu F."/>
            <person name="Nusskern D.R."/>
            <person name="Shue B.C."/>
            <person name="Zheng X.H."/>
            <person name="Zhong F."/>
            <person name="Delcher A.L."/>
            <person name="Huson D.H."/>
            <person name="Kravitz S.A."/>
            <person name="Mouchard L."/>
            <person name="Reinert K."/>
            <person name="Remington K.A."/>
            <person name="Clark A.G."/>
            <person name="Waterman M.S."/>
            <person name="Eichler E.E."/>
            <person name="Adams M.D."/>
            <person name="Hunkapiller M.W."/>
            <person name="Myers E.W."/>
            <person name="Venter J.C."/>
        </authorList>
    </citation>
    <scope>NUCLEOTIDE SEQUENCE [LARGE SCALE GENOMIC DNA]</scope>
</reference>
<reference key="4">
    <citation type="journal article" date="2004" name="Genome Res.">
        <title>The status, quality, and expansion of the NIH full-length cDNA project: the Mammalian Gene Collection (MGC).</title>
        <authorList>
            <consortium name="The MGC Project Team"/>
        </authorList>
    </citation>
    <scope>NUCLEOTIDE SEQUENCE [LARGE SCALE MRNA]</scope>
    <source>
        <tissue>Brain</tissue>
    </source>
</reference>
<reference key="5">
    <citation type="journal article" date="2009" name="Sci. Signal.">
        <title>Quantitative phosphoproteomic analysis of T cell receptor signaling reveals system-wide modulation of protein-protein interactions.</title>
        <authorList>
            <person name="Mayya V."/>
            <person name="Lundgren D.H."/>
            <person name="Hwang S.-I."/>
            <person name="Rezaul K."/>
            <person name="Wu L."/>
            <person name="Eng J.K."/>
            <person name="Rodionov V."/>
            <person name="Han D.K."/>
        </authorList>
    </citation>
    <scope>IDENTIFICATION BY MASS SPECTROMETRY [LARGE SCALE ANALYSIS]</scope>
    <source>
        <tissue>Leukemic T-cell</tissue>
    </source>
</reference>
<reference key="6">
    <citation type="journal article" date="2011" name="Sci. Signal.">
        <title>System-wide temporal characterization of the proteome and phosphoproteome of human embryonic stem cell differentiation.</title>
        <authorList>
            <person name="Rigbolt K.T."/>
            <person name="Prokhorova T.A."/>
            <person name="Akimov V."/>
            <person name="Henningsen J."/>
            <person name="Johansen P.T."/>
            <person name="Kratchmarova I."/>
            <person name="Kassem M."/>
            <person name="Mann M."/>
            <person name="Olsen J.V."/>
            <person name="Blagoev B."/>
        </authorList>
    </citation>
    <scope>IDENTIFICATION BY MASS SPECTROMETRY [LARGE SCALE ANALYSIS]</scope>
</reference>
<reference key="7">
    <citation type="journal article" date="2014" name="J. Proteomics">
        <title>An enzyme assisted RP-RPLC approach for in-depth analysis of human liver phosphoproteome.</title>
        <authorList>
            <person name="Bian Y."/>
            <person name="Song C."/>
            <person name="Cheng K."/>
            <person name="Dong M."/>
            <person name="Wang F."/>
            <person name="Huang J."/>
            <person name="Sun D."/>
            <person name="Wang L."/>
            <person name="Ye M."/>
            <person name="Zou H."/>
        </authorList>
    </citation>
    <scope>PHOSPHORYLATION [LARGE SCALE ANALYSIS] AT THR-162 AND SER-404</scope>
    <scope>IDENTIFICATION BY MASS SPECTROMETRY [LARGE SCALE ANALYSIS]</scope>
    <source>
        <tissue>Liver</tissue>
    </source>
</reference>
<reference key="8">
    <citation type="journal article" date="2014" name="Nat. Struct. Mol. Biol.">
        <title>Uncovering global SUMOylation signaling networks in a site-specific manner.</title>
        <authorList>
            <person name="Hendriks I.A."/>
            <person name="D'Souza R.C."/>
            <person name="Yang B."/>
            <person name="Verlaan-de Vries M."/>
            <person name="Mann M."/>
            <person name="Vertegaal A.C."/>
        </authorList>
    </citation>
    <scope>SUMOYLATION [LARGE SCALE ANALYSIS] AT LYS-198</scope>
    <scope>IDENTIFICATION BY MASS SPECTROMETRY [LARGE SCALE ANALYSIS]</scope>
</reference>
<reference key="9">
    <citation type="journal article" date="2015" name="Cell Rep.">
        <title>SUMO-2 orchestrates chromatin modifiers in response to DNA damage.</title>
        <authorList>
            <person name="Hendriks I.A."/>
            <person name="Treffers L.W."/>
            <person name="Verlaan-de Vries M."/>
            <person name="Olsen J.V."/>
            <person name="Vertegaal A.C."/>
        </authorList>
    </citation>
    <scope>SUMOYLATION [LARGE SCALE ANALYSIS] AT LYS-198</scope>
    <scope>IDENTIFICATION BY MASS SPECTROMETRY [LARGE SCALE ANALYSIS]</scope>
</reference>
<reference key="10">
    <citation type="journal article" date="2017" name="Nat. Struct. Mol. Biol.">
        <title>Site-specific mapping of the human SUMO proteome reveals co-modification with phosphorylation.</title>
        <authorList>
            <person name="Hendriks I.A."/>
            <person name="Lyon D."/>
            <person name="Young C."/>
            <person name="Jensen L.J."/>
            <person name="Vertegaal A.C."/>
            <person name="Nielsen M.L."/>
        </authorList>
    </citation>
    <scope>SUMOYLATION [LARGE SCALE ANALYSIS] AT LYS-198</scope>
    <scope>IDENTIFICATION BY MASS SPECTROMETRY [LARGE SCALE ANALYSIS]</scope>
</reference>
<comment type="function">
    <text>May be involved in transcriptional regulation.</text>
</comment>
<comment type="subcellular location">
    <subcellularLocation>
        <location evidence="3">Nucleus</location>
    </subcellularLocation>
</comment>
<comment type="similarity">
    <text evidence="3">Belongs to the krueppel C2H2-type zinc-finger protein family.</text>
</comment>
<gene>
    <name type="primary">ZNF362</name>
    <name type="ORF">PP6997</name>
</gene>
<protein>
    <recommendedName>
        <fullName>Zinc finger protein 362</fullName>
    </recommendedName>
</protein>